<comment type="function">
    <text evidence="1">One of the primary rRNA binding proteins, this protein initially binds near the 5'-end of the 23S rRNA. It is important during the early stages of 50S assembly. It makes multiple contacts with different domains of the 23S rRNA in the assembled 50S subunit and ribosome.</text>
</comment>
<comment type="function">
    <text evidence="1">Forms part of the polypeptide exit tunnel.</text>
</comment>
<comment type="subunit">
    <text evidence="1">Part of the 50S ribosomal subunit.</text>
</comment>
<comment type="similarity">
    <text evidence="1">Belongs to the universal ribosomal protein uL4 family.</text>
</comment>
<gene>
    <name evidence="1" type="primary">rplD</name>
    <name type="ordered locus">NGK_2437</name>
</gene>
<feature type="chain" id="PRO_1000142160" description="Large ribosomal subunit protein uL4">
    <location>
        <begin position="1"/>
        <end position="206"/>
    </location>
</feature>
<feature type="region of interest" description="Disordered" evidence="2">
    <location>
        <begin position="46"/>
        <end position="89"/>
    </location>
</feature>
<feature type="compositionally biased region" description="Basic residues" evidence="2">
    <location>
        <begin position="59"/>
        <end position="70"/>
    </location>
</feature>
<accession>B4RQX9</accession>
<sequence>MELKVIDAKGQVSGSLSVSDALFAREYNEALVHQLVNAYLANARSGNRAQKTRAEVKHSTKKPWRQKGTGRARSGMTSSPLWRKGGRAFPNKPDENFTQKVNRKMYRAGMATILSQLARDERLFVIEALTAETPKTKVFAEQVKNLALEQVLFVTKRLDENVYLASRNLPNVLVLEAQQVDPYSLLRYKKVIITKDAVAQLEEQWV</sequence>
<evidence type="ECO:0000255" key="1">
    <source>
        <dbReference type="HAMAP-Rule" id="MF_01328"/>
    </source>
</evidence>
<evidence type="ECO:0000256" key="2">
    <source>
        <dbReference type="SAM" id="MobiDB-lite"/>
    </source>
</evidence>
<evidence type="ECO:0000305" key="3"/>
<protein>
    <recommendedName>
        <fullName evidence="1">Large ribosomal subunit protein uL4</fullName>
    </recommendedName>
    <alternativeName>
        <fullName evidence="3">50S ribosomal protein L4</fullName>
    </alternativeName>
</protein>
<proteinExistence type="inferred from homology"/>
<dbReference type="EMBL" id="CP001050">
    <property type="protein sequence ID" value="ACF31038.1"/>
    <property type="molecule type" value="Genomic_DNA"/>
</dbReference>
<dbReference type="RefSeq" id="WP_003690088.1">
    <property type="nucleotide sequence ID" value="NC_011035.1"/>
</dbReference>
<dbReference type="SMR" id="B4RQX9"/>
<dbReference type="GeneID" id="66754296"/>
<dbReference type="KEGG" id="ngk:NGK_2437"/>
<dbReference type="HOGENOM" id="CLU_041575_5_2_4"/>
<dbReference type="Proteomes" id="UP000002564">
    <property type="component" value="Chromosome"/>
</dbReference>
<dbReference type="GO" id="GO:1990904">
    <property type="term" value="C:ribonucleoprotein complex"/>
    <property type="evidence" value="ECO:0007669"/>
    <property type="project" value="UniProtKB-KW"/>
</dbReference>
<dbReference type="GO" id="GO:0005840">
    <property type="term" value="C:ribosome"/>
    <property type="evidence" value="ECO:0007669"/>
    <property type="project" value="UniProtKB-KW"/>
</dbReference>
<dbReference type="GO" id="GO:0019843">
    <property type="term" value="F:rRNA binding"/>
    <property type="evidence" value="ECO:0007669"/>
    <property type="project" value="UniProtKB-UniRule"/>
</dbReference>
<dbReference type="GO" id="GO:0003735">
    <property type="term" value="F:structural constituent of ribosome"/>
    <property type="evidence" value="ECO:0007669"/>
    <property type="project" value="InterPro"/>
</dbReference>
<dbReference type="GO" id="GO:0006412">
    <property type="term" value="P:translation"/>
    <property type="evidence" value="ECO:0007669"/>
    <property type="project" value="UniProtKB-UniRule"/>
</dbReference>
<dbReference type="FunFam" id="3.40.1370.10:FF:000010">
    <property type="entry name" value="50S ribosomal protein L4"/>
    <property type="match status" value="1"/>
</dbReference>
<dbReference type="Gene3D" id="3.40.1370.10">
    <property type="match status" value="1"/>
</dbReference>
<dbReference type="HAMAP" id="MF_01328_B">
    <property type="entry name" value="Ribosomal_uL4_B"/>
    <property type="match status" value="1"/>
</dbReference>
<dbReference type="InterPro" id="IPR002136">
    <property type="entry name" value="Ribosomal_uL4"/>
</dbReference>
<dbReference type="InterPro" id="IPR013005">
    <property type="entry name" value="Ribosomal_uL4-like"/>
</dbReference>
<dbReference type="InterPro" id="IPR023574">
    <property type="entry name" value="Ribosomal_uL4_dom_sf"/>
</dbReference>
<dbReference type="NCBIfam" id="TIGR03953">
    <property type="entry name" value="rplD_bact"/>
    <property type="match status" value="1"/>
</dbReference>
<dbReference type="PANTHER" id="PTHR10746">
    <property type="entry name" value="50S RIBOSOMAL PROTEIN L4"/>
    <property type="match status" value="1"/>
</dbReference>
<dbReference type="PANTHER" id="PTHR10746:SF6">
    <property type="entry name" value="LARGE RIBOSOMAL SUBUNIT PROTEIN UL4M"/>
    <property type="match status" value="1"/>
</dbReference>
<dbReference type="Pfam" id="PF00573">
    <property type="entry name" value="Ribosomal_L4"/>
    <property type="match status" value="1"/>
</dbReference>
<dbReference type="SUPFAM" id="SSF52166">
    <property type="entry name" value="Ribosomal protein L4"/>
    <property type="match status" value="1"/>
</dbReference>
<reference key="1">
    <citation type="journal article" date="2008" name="J. Bacteriol.">
        <title>Complete genome sequence of Neisseria gonorrhoeae NCCP11945.</title>
        <authorList>
            <person name="Chung G.T."/>
            <person name="Yoo J.S."/>
            <person name="Oh H.B."/>
            <person name="Lee Y.S."/>
            <person name="Cha S.H."/>
            <person name="Kim S.J."/>
            <person name="Yoo C.K."/>
        </authorList>
    </citation>
    <scope>NUCLEOTIDE SEQUENCE [LARGE SCALE GENOMIC DNA]</scope>
    <source>
        <strain>NCCP11945</strain>
    </source>
</reference>
<keyword id="KW-0687">Ribonucleoprotein</keyword>
<keyword id="KW-0689">Ribosomal protein</keyword>
<keyword id="KW-0694">RNA-binding</keyword>
<keyword id="KW-0699">rRNA-binding</keyword>
<organism>
    <name type="scientific">Neisseria gonorrhoeae (strain NCCP11945)</name>
    <dbReference type="NCBI Taxonomy" id="521006"/>
    <lineage>
        <taxon>Bacteria</taxon>
        <taxon>Pseudomonadati</taxon>
        <taxon>Pseudomonadota</taxon>
        <taxon>Betaproteobacteria</taxon>
        <taxon>Neisseriales</taxon>
        <taxon>Neisseriaceae</taxon>
        <taxon>Neisseria</taxon>
    </lineage>
</organism>
<name>RL4_NEIG2</name>